<evidence type="ECO:0000255" key="1">
    <source>
        <dbReference type="HAMAP-Rule" id="MF_00662"/>
    </source>
</evidence>
<protein>
    <recommendedName>
        <fullName evidence="1">Phosphatidylserine decarboxylase proenzyme</fullName>
        <ecNumber evidence="1">4.1.1.65</ecNumber>
    </recommendedName>
    <component>
        <recommendedName>
            <fullName evidence="1">Phosphatidylserine decarboxylase alpha chain</fullName>
        </recommendedName>
    </component>
    <component>
        <recommendedName>
            <fullName evidence="1">Phosphatidylserine decarboxylase beta chain</fullName>
        </recommendedName>
    </component>
</protein>
<keyword id="KW-1003">Cell membrane</keyword>
<keyword id="KW-0210">Decarboxylase</keyword>
<keyword id="KW-0444">Lipid biosynthesis</keyword>
<keyword id="KW-0443">Lipid metabolism</keyword>
<keyword id="KW-0456">Lyase</keyword>
<keyword id="KW-0472">Membrane</keyword>
<keyword id="KW-0594">Phospholipid biosynthesis</keyword>
<keyword id="KW-1208">Phospholipid metabolism</keyword>
<keyword id="KW-0670">Pyruvate</keyword>
<keyword id="KW-0865">Zymogen</keyword>
<accession>B0BR01</accession>
<reference key="1">
    <citation type="journal article" date="2008" name="PLoS ONE">
        <title>Genome biology of Actinobacillus pleuropneumoniae JL03, an isolate of serotype 3 prevalent in China.</title>
        <authorList>
            <person name="Xu Z."/>
            <person name="Zhou Y."/>
            <person name="Li L."/>
            <person name="Zhou R."/>
            <person name="Xiao S."/>
            <person name="Wan Y."/>
            <person name="Zhang S."/>
            <person name="Wang K."/>
            <person name="Li W."/>
            <person name="Li L."/>
            <person name="Jin H."/>
            <person name="Kang M."/>
            <person name="Dalai B."/>
            <person name="Li T."/>
            <person name="Liu L."/>
            <person name="Cheng Y."/>
            <person name="Zhang L."/>
            <person name="Xu T."/>
            <person name="Zheng H."/>
            <person name="Pu S."/>
            <person name="Wang B."/>
            <person name="Gu W."/>
            <person name="Zhang X.L."/>
            <person name="Zhu G.-F."/>
            <person name="Wang S."/>
            <person name="Zhao G.-P."/>
            <person name="Chen H."/>
        </authorList>
    </citation>
    <scope>NUCLEOTIDE SEQUENCE [LARGE SCALE GENOMIC DNA]</scope>
    <source>
        <strain>JL03</strain>
    </source>
</reference>
<sequence>MSLKPYATPTYWQRVKVAFQYIFPQLPVTRLAGWLAEQKWGAVTHFIIRTFAKQYKVNLSEAQKSNASDYATFNEFFIRPLKENARPINQDAQALCLPADGKVSESGKIEDDRLLQAKGHFFTLETLLANDQEMANKFKDGHFITTYLSPRDYHRVHMPCDATLRKMIYVPGELFSVNPFLAEHVPNLFARNERVICEFETEFGPMVQILVGATITASMSTVWAGIINPPRTKEVVEYHYETSGETAVHLKKGQEMGAFRLGSTVINLFPKDSVEFEAHLQAGVETRMGERLAKIK</sequence>
<gene>
    <name evidence="1" type="primary">psd</name>
    <name type="ordered locus">APJL_1432</name>
</gene>
<feature type="chain" id="PRO_1000131330" description="Phosphatidylserine decarboxylase beta chain" evidence="1">
    <location>
        <begin position="1"/>
        <end position="262"/>
    </location>
</feature>
<feature type="chain" id="PRO_1000131331" description="Phosphatidylserine decarboxylase alpha chain" evidence="1">
    <location>
        <begin position="263"/>
        <end position="296"/>
    </location>
</feature>
<feature type="active site" description="Charge relay system; for autoendoproteolytic cleavage activity" evidence="1">
    <location>
        <position position="100"/>
    </location>
</feature>
<feature type="active site" description="Charge relay system; for autoendoproteolytic cleavage activity" evidence="1">
    <location>
        <position position="157"/>
    </location>
</feature>
<feature type="active site" description="Charge relay system; for autoendoproteolytic cleavage activity" evidence="1">
    <location>
        <position position="263"/>
    </location>
</feature>
<feature type="active site" description="Schiff-base intermediate with substrate; via pyruvic acid; for decarboxylase activity" evidence="1">
    <location>
        <position position="263"/>
    </location>
</feature>
<feature type="site" description="Cleavage (non-hydrolytic); by autocatalysis" evidence="1">
    <location>
        <begin position="262"/>
        <end position="263"/>
    </location>
</feature>
<feature type="modified residue" description="Pyruvic acid (Ser); by autocatalysis" evidence="1">
    <location>
        <position position="263"/>
    </location>
</feature>
<proteinExistence type="inferred from homology"/>
<dbReference type="EC" id="4.1.1.65" evidence="1"/>
<dbReference type="EMBL" id="CP000687">
    <property type="protein sequence ID" value="ABY69986.1"/>
    <property type="molecule type" value="Genomic_DNA"/>
</dbReference>
<dbReference type="SMR" id="B0BR01"/>
<dbReference type="KEGG" id="apj:APJL_1432"/>
<dbReference type="HOGENOM" id="CLU_029061_4_1_6"/>
<dbReference type="UniPathway" id="UPA00558">
    <property type="reaction ID" value="UER00616"/>
</dbReference>
<dbReference type="Proteomes" id="UP000008547">
    <property type="component" value="Chromosome"/>
</dbReference>
<dbReference type="GO" id="GO:0005886">
    <property type="term" value="C:plasma membrane"/>
    <property type="evidence" value="ECO:0007669"/>
    <property type="project" value="UniProtKB-SubCell"/>
</dbReference>
<dbReference type="GO" id="GO:0004609">
    <property type="term" value="F:phosphatidylserine decarboxylase activity"/>
    <property type="evidence" value="ECO:0007669"/>
    <property type="project" value="UniProtKB-UniRule"/>
</dbReference>
<dbReference type="GO" id="GO:0006646">
    <property type="term" value="P:phosphatidylethanolamine biosynthetic process"/>
    <property type="evidence" value="ECO:0007669"/>
    <property type="project" value="UniProtKB-UniRule"/>
</dbReference>
<dbReference type="HAMAP" id="MF_00662">
    <property type="entry name" value="PS_decarb_PSD_B_type1"/>
    <property type="match status" value="1"/>
</dbReference>
<dbReference type="InterPro" id="IPR003817">
    <property type="entry name" value="PS_Dcarbxylase"/>
</dbReference>
<dbReference type="InterPro" id="IPR033177">
    <property type="entry name" value="PSD-B"/>
</dbReference>
<dbReference type="InterPro" id="IPR033178">
    <property type="entry name" value="PSD_type1_pro"/>
</dbReference>
<dbReference type="NCBIfam" id="TIGR00163">
    <property type="entry name" value="PS_decarb"/>
    <property type="match status" value="1"/>
</dbReference>
<dbReference type="PANTHER" id="PTHR10067">
    <property type="entry name" value="PHOSPHATIDYLSERINE DECARBOXYLASE"/>
    <property type="match status" value="1"/>
</dbReference>
<dbReference type="PANTHER" id="PTHR10067:SF6">
    <property type="entry name" value="PHOSPHATIDYLSERINE DECARBOXYLASE PROENZYME, MITOCHONDRIAL"/>
    <property type="match status" value="1"/>
</dbReference>
<dbReference type="Pfam" id="PF02666">
    <property type="entry name" value="PS_Dcarbxylase"/>
    <property type="match status" value="1"/>
</dbReference>
<organism>
    <name type="scientific">Actinobacillus pleuropneumoniae serotype 3 (strain JL03)</name>
    <dbReference type="NCBI Taxonomy" id="434271"/>
    <lineage>
        <taxon>Bacteria</taxon>
        <taxon>Pseudomonadati</taxon>
        <taxon>Pseudomonadota</taxon>
        <taxon>Gammaproteobacteria</taxon>
        <taxon>Pasteurellales</taxon>
        <taxon>Pasteurellaceae</taxon>
        <taxon>Actinobacillus</taxon>
    </lineage>
</organism>
<name>PSD_ACTPJ</name>
<comment type="function">
    <text evidence="1">Catalyzes the formation of phosphatidylethanolamine (PtdEtn) from phosphatidylserine (PtdSer).</text>
</comment>
<comment type="catalytic activity">
    <reaction evidence="1">
        <text>a 1,2-diacyl-sn-glycero-3-phospho-L-serine + H(+) = a 1,2-diacyl-sn-glycero-3-phosphoethanolamine + CO2</text>
        <dbReference type="Rhea" id="RHEA:20828"/>
        <dbReference type="ChEBI" id="CHEBI:15378"/>
        <dbReference type="ChEBI" id="CHEBI:16526"/>
        <dbReference type="ChEBI" id="CHEBI:57262"/>
        <dbReference type="ChEBI" id="CHEBI:64612"/>
        <dbReference type="EC" id="4.1.1.65"/>
    </reaction>
</comment>
<comment type="cofactor">
    <cofactor evidence="1">
        <name>pyruvate</name>
        <dbReference type="ChEBI" id="CHEBI:15361"/>
    </cofactor>
    <text evidence="1">Binds 1 pyruvoyl group covalently per subunit.</text>
</comment>
<comment type="pathway">
    <text evidence="1">Phospholipid metabolism; phosphatidylethanolamine biosynthesis; phosphatidylethanolamine from CDP-diacylglycerol: step 2/2.</text>
</comment>
<comment type="subunit">
    <text evidence="1">Heterodimer of a large membrane-associated beta subunit and a small pyruvoyl-containing alpha subunit.</text>
</comment>
<comment type="subcellular location">
    <subcellularLocation>
        <location evidence="1">Cell membrane</location>
        <topology evidence="1">Peripheral membrane protein</topology>
    </subcellularLocation>
</comment>
<comment type="PTM">
    <text evidence="1">Is synthesized initially as an inactive proenzyme. Formation of the active enzyme involves a self-maturation process in which the active site pyruvoyl group is generated from an internal serine residue via an autocatalytic post-translational modification. Two non-identical subunits are generated from the proenzyme in this reaction, and the pyruvate is formed at the N-terminus of the alpha chain, which is derived from the carboxyl end of the proenzyme. The autoendoproteolytic cleavage occurs by a canonical serine protease mechanism, in which the side chain hydroxyl group of the serine supplies its oxygen atom to form the C-terminus of the beta chain, while the remainder of the serine residue undergoes an oxidative deamination to produce ammonia and the pyruvoyl prosthetic group on the alpha chain. During this reaction, the Ser that is part of the protease active site of the proenzyme becomes the pyruvoyl prosthetic group, which constitutes an essential element of the active site of the mature decarboxylase.</text>
</comment>
<comment type="similarity">
    <text evidence="1">Belongs to the phosphatidylserine decarboxylase family. PSD-B subfamily. Prokaryotic type I sub-subfamily.</text>
</comment>